<feature type="signal peptide" evidence="2">
    <location>
        <begin position="1"/>
        <end position="21"/>
    </location>
</feature>
<feature type="chain" id="PRO_0000033393" description="Invertase">
    <location>
        <begin position="22"/>
        <end position="534"/>
    </location>
</feature>
<feature type="active site" evidence="3">
    <location>
        <position position="49"/>
    </location>
</feature>
<feature type="binding site" evidence="1">
    <location>
        <begin position="46"/>
        <end position="49"/>
    </location>
    <ligand>
        <name>substrate</name>
    </ligand>
</feature>
<feature type="binding site" evidence="1">
    <location>
        <position position="67"/>
    </location>
    <ligand>
        <name>substrate</name>
    </ligand>
</feature>
<feature type="binding site" evidence="1">
    <location>
        <begin position="109"/>
        <end position="110"/>
    </location>
    <ligand>
        <name>substrate</name>
    </ligand>
</feature>
<feature type="binding site" evidence="1">
    <location>
        <begin position="177"/>
        <end position="178"/>
    </location>
    <ligand>
        <name>substrate</name>
    </ligand>
</feature>
<feature type="binding site" evidence="1">
    <location>
        <position position="229"/>
    </location>
    <ligand>
        <name>substrate</name>
    </ligand>
</feature>
<feature type="binding site" evidence="1">
    <location>
        <position position="313"/>
    </location>
    <ligand>
        <name>substrate</name>
    </ligand>
</feature>
<feature type="glycosylation site" description="N-linked (GlcNAc...) asparagine" evidence="2">
    <location>
        <position position="71"/>
    </location>
</feature>
<feature type="glycosylation site" description="N-linked (GlcNAc...) asparagine" evidence="2">
    <location>
        <position position="118"/>
    </location>
</feature>
<feature type="glycosylation site" description="N-linked (GlcNAc...) asparagine" evidence="2">
    <location>
        <position position="119"/>
    </location>
</feature>
<feature type="glycosylation site" description="N-linked (GlcNAc...) asparagine" evidence="2">
    <location>
        <position position="172"/>
    </location>
</feature>
<feature type="glycosylation site" description="N-linked (GlcNAc...) asparagine" evidence="2">
    <location>
        <position position="218"/>
    </location>
</feature>
<feature type="glycosylation site" description="N-linked (GlcNAc...) asparagine" evidence="2">
    <location>
        <position position="375"/>
    </location>
</feature>
<feature type="glycosylation site" description="N-linked (GlcNAc...) asparagine" evidence="2">
    <location>
        <position position="381"/>
    </location>
</feature>
<feature type="glycosylation site" description="N-linked (GlcNAc...) asparagine" evidence="2">
    <location>
        <position position="392"/>
    </location>
</feature>
<feature type="glycosylation site" description="N-linked (GlcNAc...) asparagine" evidence="2">
    <location>
        <position position="420"/>
    </location>
</feature>
<reference key="1">
    <citation type="journal article" date="2004" name="Nature">
        <title>Genome evolution in yeasts.</title>
        <authorList>
            <person name="Dujon B."/>
            <person name="Sherman D."/>
            <person name="Fischer G."/>
            <person name="Durrens P."/>
            <person name="Casaregola S."/>
            <person name="Lafontaine I."/>
            <person name="de Montigny J."/>
            <person name="Marck C."/>
            <person name="Neuveglise C."/>
            <person name="Talla E."/>
            <person name="Goffard N."/>
            <person name="Frangeul L."/>
            <person name="Aigle M."/>
            <person name="Anthouard V."/>
            <person name="Babour A."/>
            <person name="Barbe V."/>
            <person name="Barnay S."/>
            <person name="Blanchin S."/>
            <person name="Beckerich J.-M."/>
            <person name="Beyne E."/>
            <person name="Bleykasten C."/>
            <person name="Boisrame A."/>
            <person name="Boyer J."/>
            <person name="Cattolico L."/>
            <person name="Confanioleri F."/>
            <person name="de Daruvar A."/>
            <person name="Despons L."/>
            <person name="Fabre E."/>
            <person name="Fairhead C."/>
            <person name="Ferry-Dumazet H."/>
            <person name="Groppi A."/>
            <person name="Hantraye F."/>
            <person name="Hennequin C."/>
            <person name="Jauniaux N."/>
            <person name="Joyet P."/>
            <person name="Kachouri R."/>
            <person name="Kerrest A."/>
            <person name="Koszul R."/>
            <person name="Lemaire M."/>
            <person name="Lesur I."/>
            <person name="Ma L."/>
            <person name="Muller H."/>
            <person name="Nicaud J.-M."/>
            <person name="Nikolski M."/>
            <person name="Oztas S."/>
            <person name="Ozier-Kalogeropoulos O."/>
            <person name="Pellenz S."/>
            <person name="Potier S."/>
            <person name="Richard G.-F."/>
            <person name="Straub M.-L."/>
            <person name="Suleau A."/>
            <person name="Swennen D."/>
            <person name="Tekaia F."/>
            <person name="Wesolowski-Louvel M."/>
            <person name="Westhof E."/>
            <person name="Wirth B."/>
            <person name="Zeniou-Meyer M."/>
            <person name="Zivanovic Y."/>
            <person name="Bolotin-Fukuhara M."/>
            <person name="Thierry A."/>
            <person name="Bouchier C."/>
            <person name="Caudron B."/>
            <person name="Scarpelli C."/>
            <person name="Gaillardin C."/>
            <person name="Weissenbach J."/>
            <person name="Wincker P."/>
            <person name="Souciet J.-L."/>
        </authorList>
    </citation>
    <scope>NUCLEOTIDE SEQUENCE [LARGE SCALE GENOMIC DNA]</scope>
    <source>
        <strain>ATCC 36239 / CBS 767 / BCRC 21394 / JCM 1990 / NBRC 0083 / IGC 2968</strain>
    </source>
</reference>
<organism>
    <name type="scientific">Debaryomyces hansenii (strain ATCC 36239 / CBS 767 / BCRC 21394 / JCM 1990 / NBRC 0083 / IGC 2968)</name>
    <name type="common">Yeast</name>
    <name type="synonym">Torulaspora hansenii</name>
    <dbReference type="NCBI Taxonomy" id="284592"/>
    <lineage>
        <taxon>Eukaryota</taxon>
        <taxon>Fungi</taxon>
        <taxon>Dikarya</taxon>
        <taxon>Ascomycota</taxon>
        <taxon>Saccharomycotina</taxon>
        <taxon>Pichiomycetes</taxon>
        <taxon>Debaryomycetaceae</taxon>
        <taxon>Debaryomyces</taxon>
    </lineage>
</organism>
<evidence type="ECO:0000250" key="1"/>
<evidence type="ECO:0000255" key="2"/>
<evidence type="ECO:0000255" key="3">
    <source>
        <dbReference type="PROSITE-ProRule" id="PRU10067"/>
    </source>
</evidence>
<evidence type="ECO:0000305" key="4"/>
<proteinExistence type="inferred from homology"/>
<dbReference type="EC" id="3.2.1.26"/>
<dbReference type="EMBL" id="CR382138">
    <property type="protein sequence ID" value="CAG89931.2"/>
    <property type="molecule type" value="Genomic_DNA"/>
</dbReference>
<dbReference type="RefSeq" id="XP_461505.2">
    <property type="nucleotide sequence ID" value="XM_461505.1"/>
</dbReference>
<dbReference type="SMR" id="Q6BJW6"/>
<dbReference type="FunCoup" id="Q6BJW6">
    <property type="interactions" value="483"/>
</dbReference>
<dbReference type="STRING" id="284592.Q6BJW6"/>
<dbReference type="CAZy" id="GH32">
    <property type="family name" value="Glycoside Hydrolase Family 32"/>
</dbReference>
<dbReference type="GlyCosmos" id="Q6BJW6">
    <property type="glycosylation" value="9 sites, No reported glycans"/>
</dbReference>
<dbReference type="GeneID" id="2903733"/>
<dbReference type="KEGG" id="dha:DEHA2F26818g"/>
<dbReference type="VEuPathDB" id="FungiDB:DEHA2F26818g"/>
<dbReference type="eggNOG" id="KOG0228">
    <property type="taxonomic scope" value="Eukaryota"/>
</dbReference>
<dbReference type="HOGENOM" id="CLU_001528_3_3_1"/>
<dbReference type="InParanoid" id="Q6BJW6"/>
<dbReference type="OMA" id="GTEWRHA"/>
<dbReference type="OrthoDB" id="202537at2759"/>
<dbReference type="Proteomes" id="UP000000599">
    <property type="component" value="Chromosome F"/>
</dbReference>
<dbReference type="GO" id="GO:0005576">
    <property type="term" value="C:extracellular region"/>
    <property type="evidence" value="ECO:0007669"/>
    <property type="project" value="EnsemblFungi"/>
</dbReference>
<dbReference type="GO" id="GO:0000324">
    <property type="term" value="C:fungal-type vacuole"/>
    <property type="evidence" value="ECO:0007669"/>
    <property type="project" value="TreeGrafter"/>
</dbReference>
<dbReference type="GO" id="GO:0051670">
    <property type="term" value="F:inulinase activity"/>
    <property type="evidence" value="ECO:0007669"/>
    <property type="project" value="EnsemblFungi"/>
</dbReference>
<dbReference type="GO" id="GO:0004575">
    <property type="term" value="F:sucrose alpha-glucosidase activity"/>
    <property type="evidence" value="ECO:0007669"/>
    <property type="project" value="TreeGrafter"/>
</dbReference>
<dbReference type="GO" id="GO:1902927">
    <property type="term" value="P:inulin catabolic process"/>
    <property type="evidence" value="ECO:0007669"/>
    <property type="project" value="EnsemblFungi"/>
</dbReference>
<dbReference type="GO" id="GO:0034484">
    <property type="term" value="P:raffinose catabolic process"/>
    <property type="evidence" value="ECO:0007669"/>
    <property type="project" value="EnsemblFungi"/>
</dbReference>
<dbReference type="GO" id="GO:0005987">
    <property type="term" value="P:sucrose catabolic process"/>
    <property type="evidence" value="ECO:0007669"/>
    <property type="project" value="EnsemblFungi"/>
</dbReference>
<dbReference type="CDD" id="cd18622">
    <property type="entry name" value="GH32_Inu-like"/>
    <property type="match status" value="1"/>
</dbReference>
<dbReference type="FunFam" id="2.115.10.20:FF:000002">
    <property type="entry name" value="Invertase 2"/>
    <property type="match status" value="1"/>
</dbReference>
<dbReference type="Gene3D" id="2.60.120.560">
    <property type="entry name" value="Exo-inulinase, domain 1"/>
    <property type="match status" value="1"/>
</dbReference>
<dbReference type="Gene3D" id="2.115.10.20">
    <property type="entry name" value="Glycosyl hydrolase domain, family 43"/>
    <property type="match status" value="1"/>
</dbReference>
<dbReference type="InterPro" id="IPR013320">
    <property type="entry name" value="ConA-like_dom_sf"/>
</dbReference>
<dbReference type="InterPro" id="IPR001362">
    <property type="entry name" value="Glyco_hydro_32"/>
</dbReference>
<dbReference type="InterPro" id="IPR018053">
    <property type="entry name" value="Glyco_hydro_32_AS"/>
</dbReference>
<dbReference type="InterPro" id="IPR013189">
    <property type="entry name" value="Glyco_hydro_32_C"/>
</dbReference>
<dbReference type="InterPro" id="IPR013148">
    <property type="entry name" value="Glyco_hydro_32_N"/>
</dbReference>
<dbReference type="InterPro" id="IPR023296">
    <property type="entry name" value="Glyco_hydro_beta-prop_sf"/>
</dbReference>
<dbReference type="PANTHER" id="PTHR42800">
    <property type="entry name" value="EXOINULINASE INUD (AFU_ORTHOLOGUE AFUA_5G00480)"/>
    <property type="match status" value="1"/>
</dbReference>
<dbReference type="PANTHER" id="PTHR42800:SF4">
    <property type="entry name" value="INVERTASE 2"/>
    <property type="match status" value="1"/>
</dbReference>
<dbReference type="Pfam" id="PF08244">
    <property type="entry name" value="Glyco_hydro_32C"/>
    <property type="match status" value="1"/>
</dbReference>
<dbReference type="Pfam" id="PF00251">
    <property type="entry name" value="Glyco_hydro_32N"/>
    <property type="match status" value="1"/>
</dbReference>
<dbReference type="SMART" id="SM00640">
    <property type="entry name" value="Glyco_32"/>
    <property type="match status" value="1"/>
</dbReference>
<dbReference type="SUPFAM" id="SSF75005">
    <property type="entry name" value="Arabinanase/levansucrase/invertase"/>
    <property type="match status" value="1"/>
</dbReference>
<dbReference type="SUPFAM" id="SSF49899">
    <property type="entry name" value="Concanavalin A-like lectins/glucanases"/>
    <property type="match status" value="1"/>
</dbReference>
<dbReference type="PROSITE" id="PS00609">
    <property type="entry name" value="GLYCOSYL_HYDROL_F32"/>
    <property type="match status" value="1"/>
</dbReference>
<protein>
    <recommendedName>
        <fullName>Invertase</fullName>
        <ecNumber>3.2.1.26</ecNumber>
    </recommendedName>
    <alternativeName>
        <fullName>Beta-fructofuranosidase</fullName>
    </alternativeName>
    <alternativeName>
        <fullName>Saccharase</fullName>
    </alternativeName>
</protein>
<sequence length="534" mass="60991">MKITTLVASILMSVLLEPVIASFIDTGKDTSAYNRPLIHLTPNVGWLNDPNGLFYDKKTSVWHAYYQYNPNDTIWGQPLYWGHSSSKDLTHWEEHQVALGPQNDDEGIFSGSIVIDYNNTSGFFDESIDKDQRVVAIYTNSIPDTQTQDIAYSLDGGETFTKYKKNPVIDVNSTQFRDPKVFWHEETNKWIMVVSKSQEYKIQIFGSLDLKTWDLHSNFTSGYLGNQYECPGLIKVPIENTNDYKWVMFLAINPGSPAGGSSNQYFIGEFDGFEFKQDDSITRVMDAGKDFYAFQTFSDNEQDVIGLAWASNWQYANVVPTNPWRSSMSLARKYTLGYVNQNVETKIMTLIQTPILNNLDVINKVEKNNHLLTKNDSVITNFSSSTGLLDFNTTFKVVGESIDSNSLSNIEILIHSQMSNSSTESIKVGFDRSVSAFYFNRDIPNVEFNNNPYFTNKFSTYVEPSHYDEDDMPVYKIYGIVDKNILELYFNDGTQTMTNTFFMSEDKYPHQIEIASNVDGQFELQSLLIRELNN</sequence>
<accession>Q6BJW6</accession>
<name>INV_DEBHA</name>
<keyword id="KW-0325">Glycoprotein</keyword>
<keyword id="KW-0326">Glycosidase</keyword>
<keyword id="KW-0378">Hydrolase</keyword>
<keyword id="KW-1185">Reference proteome</keyword>
<keyword id="KW-0732">Signal</keyword>
<gene>
    <name type="primary">INV</name>
    <name type="ordered locus">DEHA2F26818g</name>
</gene>
<comment type="catalytic activity">
    <reaction evidence="3">
        <text>Hydrolysis of terminal non-reducing beta-D-fructofuranoside residues in beta-D-fructofuranosides.</text>
        <dbReference type="EC" id="3.2.1.26"/>
    </reaction>
</comment>
<comment type="similarity">
    <text evidence="4">Belongs to the glycosyl hydrolase 32 family.</text>
</comment>